<reference key="1">
    <citation type="journal article" date="2002" name="Proc. Natl. Acad. Sci. U.S.A.">
        <title>The genome sequence of the facultative intracellular pathogen Brucella melitensis.</title>
        <authorList>
            <person name="DelVecchio V.G."/>
            <person name="Kapatral V."/>
            <person name="Redkar R.J."/>
            <person name="Patra G."/>
            <person name="Mujer C."/>
            <person name="Los T."/>
            <person name="Ivanova N."/>
            <person name="Anderson I."/>
            <person name="Bhattacharyya A."/>
            <person name="Lykidis A."/>
            <person name="Reznik G."/>
            <person name="Jablonski L."/>
            <person name="Larsen N."/>
            <person name="D'Souza M."/>
            <person name="Bernal A."/>
            <person name="Mazur M."/>
            <person name="Goltsman E."/>
            <person name="Selkov E."/>
            <person name="Elzer P.H."/>
            <person name="Hagius S."/>
            <person name="O'Callaghan D."/>
            <person name="Letesson J.-J."/>
            <person name="Haselkorn R."/>
            <person name="Kyrpides N.C."/>
            <person name="Overbeek R."/>
        </authorList>
    </citation>
    <scope>NUCLEOTIDE SEQUENCE [LARGE SCALE GENOMIC DNA]</scope>
    <source>
        <strain>ATCC 23456 / CCUG 17765 / NCTC 10094 / 16M</strain>
    </source>
</reference>
<protein>
    <recommendedName>
        <fullName evidence="1">4-hydroxy-3-methylbut-2-en-1-yl diphosphate synthase (flavodoxin)</fullName>
        <ecNumber evidence="1">1.17.7.3</ecNumber>
    </recommendedName>
    <alternativeName>
        <fullName evidence="1">1-hydroxy-2-methyl-2-(E)-butenyl 4-diphosphate synthase</fullName>
    </alternativeName>
</protein>
<organism>
    <name type="scientific">Brucella melitensis biotype 1 (strain ATCC 23456 / CCUG 17765 / NCTC 10094 / 16M)</name>
    <dbReference type="NCBI Taxonomy" id="224914"/>
    <lineage>
        <taxon>Bacteria</taxon>
        <taxon>Pseudomonadati</taxon>
        <taxon>Pseudomonadota</taxon>
        <taxon>Alphaproteobacteria</taxon>
        <taxon>Hyphomicrobiales</taxon>
        <taxon>Brucellaceae</taxon>
        <taxon>Brucella/Ochrobactrum group</taxon>
        <taxon>Brucella</taxon>
    </lineage>
</organism>
<name>ISPG_BRUME</name>
<comment type="function">
    <text evidence="1">Converts 2C-methyl-D-erythritol 2,4-cyclodiphosphate (ME-2,4cPP) into 1-hydroxy-2-methyl-2-(E)-butenyl 4-diphosphate.</text>
</comment>
<comment type="catalytic activity">
    <reaction evidence="1">
        <text>(2E)-4-hydroxy-3-methylbut-2-enyl diphosphate + oxidized [flavodoxin] + H2O + 2 H(+) = 2-C-methyl-D-erythritol 2,4-cyclic diphosphate + reduced [flavodoxin]</text>
        <dbReference type="Rhea" id="RHEA:43604"/>
        <dbReference type="Rhea" id="RHEA-COMP:10622"/>
        <dbReference type="Rhea" id="RHEA-COMP:10623"/>
        <dbReference type="ChEBI" id="CHEBI:15377"/>
        <dbReference type="ChEBI" id="CHEBI:15378"/>
        <dbReference type="ChEBI" id="CHEBI:57618"/>
        <dbReference type="ChEBI" id="CHEBI:58210"/>
        <dbReference type="ChEBI" id="CHEBI:58483"/>
        <dbReference type="ChEBI" id="CHEBI:128753"/>
        <dbReference type="EC" id="1.17.7.3"/>
    </reaction>
</comment>
<comment type="cofactor">
    <cofactor evidence="1">
        <name>[4Fe-4S] cluster</name>
        <dbReference type="ChEBI" id="CHEBI:49883"/>
    </cofactor>
    <text evidence="1">Binds 1 [4Fe-4S] cluster.</text>
</comment>
<comment type="pathway">
    <text evidence="1">Isoprenoid biosynthesis; isopentenyl diphosphate biosynthesis via DXP pathway; isopentenyl diphosphate from 1-deoxy-D-xylulose 5-phosphate: step 5/6.</text>
</comment>
<comment type="similarity">
    <text evidence="1">Belongs to the IspG family.</text>
</comment>
<comment type="sequence caution" evidence="2">
    <conflict type="erroneous initiation">
        <sequence resource="EMBL-CDS" id="AAL51451"/>
    </conflict>
</comment>
<gene>
    <name evidence="1" type="primary">ispG</name>
    <name type="ordered locus">BMEI0269</name>
</gene>
<feature type="chain" id="PRO_0000190547" description="4-hydroxy-3-methylbut-2-en-1-yl diphosphate synthase (flavodoxin)">
    <location>
        <begin position="1"/>
        <end position="420"/>
    </location>
</feature>
<feature type="binding site" evidence="1">
    <location>
        <position position="307"/>
    </location>
    <ligand>
        <name>[4Fe-4S] cluster</name>
        <dbReference type="ChEBI" id="CHEBI:49883"/>
    </ligand>
</feature>
<feature type="binding site" evidence="1">
    <location>
        <position position="310"/>
    </location>
    <ligand>
        <name>[4Fe-4S] cluster</name>
        <dbReference type="ChEBI" id="CHEBI:49883"/>
    </ligand>
</feature>
<feature type="binding site" evidence="1">
    <location>
        <position position="353"/>
    </location>
    <ligand>
        <name>[4Fe-4S] cluster</name>
        <dbReference type="ChEBI" id="CHEBI:49883"/>
    </ligand>
</feature>
<feature type="binding site" evidence="1">
    <location>
        <position position="360"/>
    </location>
    <ligand>
        <name>[4Fe-4S] cluster</name>
        <dbReference type="ChEBI" id="CHEBI:49883"/>
    </ligand>
</feature>
<dbReference type="EC" id="1.17.7.3" evidence="1"/>
<dbReference type="EMBL" id="AE008917">
    <property type="protein sequence ID" value="AAL51451.1"/>
    <property type="status" value="ALT_INIT"/>
    <property type="molecule type" value="Genomic_DNA"/>
</dbReference>
<dbReference type="PIR" id="AH3285">
    <property type="entry name" value="AH3285"/>
</dbReference>
<dbReference type="RefSeq" id="WP_004684229.1">
    <property type="nucleotide sequence ID" value="NZ_GG703781.1"/>
</dbReference>
<dbReference type="SMR" id="Q8YJ17"/>
<dbReference type="GeneID" id="45125066"/>
<dbReference type="KEGG" id="bme:BMEI0269"/>
<dbReference type="KEGG" id="bmel:DK63_1163"/>
<dbReference type="PATRIC" id="fig|224914.52.peg.1230"/>
<dbReference type="eggNOG" id="COG0821">
    <property type="taxonomic scope" value="Bacteria"/>
</dbReference>
<dbReference type="PhylomeDB" id="Q8YJ17"/>
<dbReference type="UniPathway" id="UPA00056">
    <property type="reaction ID" value="UER00096"/>
</dbReference>
<dbReference type="Proteomes" id="UP000000419">
    <property type="component" value="Chromosome I"/>
</dbReference>
<dbReference type="GO" id="GO:0051539">
    <property type="term" value="F:4 iron, 4 sulfur cluster binding"/>
    <property type="evidence" value="ECO:0007669"/>
    <property type="project" value="UniProtKB-UniRule"/>
</dbReference>
<dbReference type="GO" id="GO:0046429">
    <property type="term" value="F:4-hydroxy-3-methylbut-2-en-1-yl diphosphate synthase activity (ferredoxin)"/>
    <property type="evidence" value="ECO:0007669"/>
    <property type="project" value="UniProtKB-UniRule"/>
</dbReference>
<dbReference type="GO" id="GO:0141197">
    <property type="term" value="F:4-hydroxy-3-methylbut-2-enyl-diphosphate synthase activity (flavodoxin)"/>
    <property type="evidence" value="ECO:0007669"/>
    <property type="project" value="UniProtKB-EC"/>
</dbReference>
<dbReference type="GO" id="GO:0005506">
    <property type="term" value="F:iron ion binding"/>
    <property type="evidence" value="ECO:0007669"/>
    <property type="project" value="InterPro"/>
</dbReference>
<dbReference type="GO" id="GO:0019288">
    <property type="term" value="P:isopentenyl diphosphate biosynthetic process, methylerythritol 4-phosphate pathway"/>
    <property type="evidence" value="ECO:0007669"/>
    <property type="project" value="UniProtKB-UniRule"/>
</dbReference>
<dbReference type="GO" id="GO:0016114">
    <property type="term" value="P:terpenoid biosynthetic process"/>
    <property type="evidence" value="ECO:0007669"/>
    <property type="project" value="InterPro"/>
</dbReference>
<dbReference type="FunFam" id="3.30.413.10:FF:000012">
    <property type="entry name" value="4-hydroxy-3-methylbut-2-en-1-yl diphosphate synthase (flavodoxin)"/>
    <property type="match status" value="1"/>
</dbReference>
<dbReference type="Gene3D" id="3.20.20.20">
    <property type="entry name" value="Dihydropteroate synthase-like"/>
    <property type="match status" value="1"/>
</dbReference>
<dbReference type="Gene3D" id="3.30.413.10">
    <property type="entry name" value="Sulfite Reductase Hemoprotein, domain 1"/>
    <property type="match status" value="1"/>
</dbReference>
<dbReference type="HAMAP" id="MF_00159">
    <property type="entry name" value="IspG"/>
    <property type="match status" value="1"/>
</dbReference>
<dbReference type="InterPro" id="IPR011005">
    <property type="entry name" value="Dihydropteroate_synth-like_sf"/>
</dbReference>
<dbReference type="InterPro" id="IPR016425">
    <property type="entry name" value="IspG_bac"/>
</dbReference>
<dbReference type="InterPro" id="IPR004588">
    <property type="entry name" value="IspG_bac-typ"/>
</dbReference>
<dbReference type="InterPro" id="IPR045854">
    <property type="entry name" value="NO2/SO3_Rdtase_4Fe4S_sf"/>
</dbReference>
<dbReference type="NCBIfam" id="TIGR00612">
    <property type="entry name" value="ispG_gcpE"/>
    <property type="match status" value="1"/>
</dbReference>
<dbReference type="NCBIfam" id="NF001540">
    <property type="entry name" value="PRK00366.1"/>
    <property type="match status" value="1"/>
</dbReference>
<dbReference type="PANTHER" id="PTHR30454">
    <property type="entry name" value="4-HYDROXY-3-METHYLBUT-2-EN-1-YL DIPHOSPHATE SYNTHASE"/>
    <property type="match status" value="1"/>
</dbReference>
<dbReference type="PANTHER" id="PTHR30454:SF0">
    <property type="entry name" value="4-HYDROXY-3-METHYLBUT-2-EN-1-YL DIPHOSPHATE SYNTHASE (FERREDOXIN), CHLOROPLASTIC"/>
    <property type="match status" value="1"/>
</dbReference>
<dbReference type="Pfam" id="PF04551">
    <property type="entry name" value="GcpE"/>
    <property type="match status" value="1"/>
</dbReference>
<dbReference type="PIRSF" id="PIRSF004640">
    <property type="entry name" value="IspG"/>
    <property type="match status" value="1"/>
</dbReference>
<dbReference type="SUPFAM" id="SSF56014">
    <property type="entry name" value="Nitrite and sulphite reductase 4Fe-4S domain-like"/>
    <property type="match status" value="1"/>
</dbReference>
<evidence type="ECO:0000255" key="1">
    <source>
        <dbReference type="HAMAP-Rule" id="MF_00159"/>
    </source>
</evidence>
<evidence type="ECO:0000305" key="2"/>
<keyword id="KW-0004">4Fe-4S</keyword>
<keyword id="KW-0408">Iron</keyword>
<keyword id="KW-0411">Iron-sulfur</keyword>
<keyword id="KW-0414">Isoprene biosynthesis</keyword>
<keyword id="KW-0479">Metal-binding</keyword>
<keyword id="KW-0560">Oxidoreductase</keyword>
<sequence length="420" mass="45060">MSSETVSYFSHPFPRRQSVGVSVGGVIVGGSAPVVVQSMTNTDTADVDSTVAQVAALHRAGSEIVRITVDRDESAAAVPKIRERLERLGHDVPLVGDFHYIGHKLLADHPACAEALAKYRINPGNVGFKDKKDKQFADIVEMAIRYDKPVRIGVNWGSLDQELLTTLMDRNQAEGAPLSAQDVMREAIVQSALISANLAEEIGLGRDKIILSAKVSQVQDLIAVYTMLAQRSNHALHLGLTEAGMGTKGIVASSAAMGILLQQGIGDTIRISLTPEPGGDRTREVQVAQELLQTMGFRQFVPIVAACPGCGRTTSTVFQELAQTIQEDIRRNMPLWREKYPGVEALSVAVMGCIVNGPGESKHADIGISLPGTGETPSAPVFVDGKKVTTLRGPGIAEDFQKMVADYIENRFGLGRKIAS</sequence>
<proteinExistence type="inferred from homology"/>
<accession>Q8YJ17</accession>